<keyword id="KW-0067">ATP-binding</keyword>
<keyword id="KW-0158">Chromosome</keyword>
<keyword id="KW-0238">DNA-binding</keyword>
<keyword id="KW-0378">Hydrolase</keyword>
<keyword id="KW-0479">Metal-binding</keyword>
<keyword id="KW-0547">Nucleotide-binding</keyword>
<keyword id="KW-0539">Nucleus</keyword>
<keyword id="KW-0597">Phosphoprotein</keyword>
<keyword id="KW-1185">Reference proteome</keyword>
<keyword id="KW-0677">Repeat</keyword>
<keyword id="KW-0678">Repressor</keyword>
<keyword id="KW-0804">Transcription</keyword>
<keyword id="KW-0805">Transcription regulation</keyword>
<keyword id="KW-0862">Zinc</keyword>
<keyword id="KW-0863">Zinc-finger</keyword>
<reference key="1">
    <citation type="journal article" date="1998" name="Science">
        <title>dMi-2, a hunchback-interacting protein that functions in Polycomb repression.</title>
        <authorList>
            <person name="Kehle J."/>
            <person name="Beuchle D."/>
            <person name="Treuheit S."/>
            <person name="Christen B."/>
            <person name="Kennison J.A."/>
            <person name="Bienz M."/>
            <person name="Muller J."/>
        </authorList>
    </citation>
    <scope>NUCLEOTIDE SEQUENCE [MRNA]</scope>
    <scope>FUNCTION</scope>
    <scope>MUTAGENESIS OF GLY-737</scope>
</reference>
<reference key="2">
    <citation type="journal article" date="2000" name="Science">
        <title>The genome sequence of Drosophila melanogaster.</title>
        <authorList>
            <person name="Adams M.D."/>
            <person name="Celniker S.E."/>
            <person name="Holt R.A."/>
            <person name="Evans C.A."/>
            <person name="Gocayne J.D."/>
            <person name="Amanatides P.G."/>
            <person name="Scherer S.E."/>
            <person name="Li P.W."/>
            <person name="Hoskins R.A."/>
            <person name="Galle R.F."/>
            <person name="George R.A."/>
            <person name="Lewis S.E."/>
            <person name="Richards S."/>
            <person name="Ashburner M."/>
            <person name="Henderson S.N."/>
            <person name="Sutton G.G."/>
            <person name="Wortman J.R."/>
            <person name="Yandell M.D."/>
            <person name="Zhang Q."/>
            <person name="Chen L.X."/>
            <person name="Brandon R.C."/>
            <person name="Rogers Y.-H.C."/>
            <person name="Blazej R.G."/>
            <person name="Champe M."/>
            <person name="Pfeiffer B.D."/>
            <person name="Wan K.H."/>
            <person name="Doyle C."/>
            <person name="Baxter E.G."/>
            <person name="Helt G."/>
            <person name="Nelson C.R."/>
            <person name="Miklos G.L.G."/>
            <person name="Abril J.F."/>
            <person name="Agbayani A."/>
            <person name="An H.-J."/>
            <person name="Andrews-Pfannkoch C."/>
            <person name="Baldwin D."/>
            <person name="Ballew R.M."/>
            <person name="Basu A."/>
            <person name="Baxendale J."/>
            <person name="Bayraktaroglu L."/>
            <person name="Beasley E.M."/>
            <person name="Beeson K.Y."/>
            <person name="Benos P.V."/>
            <person name="Berman B.P."/>
            <person name="Bhandari D."/>
            <person name="Bolshakov S."/>
            <person name="Borkova D."/>
            <person name="Botchan M.R."/>
            <person name="Bouck J."/>
            <person name="Brokstein P."/>
            <person name="Brottier P."/>
            <person name="Burtis K.C."/>
            <person name="Busam D.A."/>
            <person name="Butler H."/>
            <person name="Cadieu E."/>
            <person name="Center A."/>
            <person name="Chandra I."/>
            <person name="Cherry J.M."/>
            <person name="Cawley S."/>
            <person name="Dahlke C."/>
            <person name="Davenport L.B."/>
            <person name="Davies P."/>
            <person name="de Pablos B."/>
            <person name="Delcher A."/>
            <person name="Deng Z."/>
            <person name="Mays A.D."/>
            <person name="Dew I."/>
            <person name="Dietz S.M."/>
            <person name="Dodson K."/>
            <person name="Doup L.E."/>
            <person name="Downes M."/>
            <person name="Dugan-Rocha S."/>
            <person name="Dunkov B.C."/>
            <person name="Dunn P."/>
            <person name="Durbin K.J."/>
            <person name="Evangelista C.C."/>
            <person name="Ferraz C."/>
            <person name="Ferriera S."/>
            <person name="Fleischmann W."/>
            <person name="Fosler C."/>
            <person name="Gabrielian A.E."/>
            <person name="Garg N.S."/>
            <person name="Gelbart W.M."/>
            <person name="Glasser K."/>
            <person name="Glodek A."/>
            <person name="Gong F."/>
            <person name="Gorrell J.H."/>
            <person name="Gu Z."/>
            <person name="Guan P."/>
            <person name="Harris M."/>
            <person name="Harris N.L."/>
            <person name="Harvey D.A."/>
            <person name="Heiman T.J."/>
            <person name="Hernandez J.R."/>
            <person name="Houck J."/>
            <person name="Hostin D."/>
            <person name="Houston K.A."/>
            <person name="Howland T.J."/>
            <person name="Wei M.-H."/>
            <person name="Ibegwam C."/>
            <person name="Jalali M."/>
            <person name="Kalush F."/>
            <person name="Karpen G.H."/>
            <person name="Ke Z."/>
            <person name="Kennison J.A."/>
            <person name="Ketchum K.A."/>
            <person name="Kimmel B.E."/>
            <person name="Kodira C.D."/>
            <person name="Kraft C.L."/>
            <person name="Kravitz S."/>
            <person name="Kulp D."/>
            <person name="Lai Z."/>
            <person name="Lasko P."/>
            <person name="Lei Y."/>
            <person name="Levitsky A.A."/>
            <person name="Li J.H."/>
            <person name="Li Z."/>
            <person name="Liang Y."/>
            <person name="Lin X."/>
            <person name="Liu X."/>
            <person name="Mattei B."/>
            <person name="McIntosh T.C."/>
            <person name="McLeod M.P."/>
            <person name="McPherson D."/>
            <person name="Merkulov G."/>
            <person name="Milshina N.V."/>
            <person name="Mobarry C."/>
            <person name="Morris J."/>
            <person name="Moshrefi A."/>
            <person name="Mount S.M."/>
            <person name="Moy M."/>
            <person name="Murphy B."/>
            <person name="Murphy L."/>
            <person name="Muzny D.M."/>
            <person name="Nelson D.L."/>
            <person name="Nelson D.R."/>
            <person name="Nelson K.A."/>
            <person name="Nixon K."/>
            <person name="Nusskern D.R."/>
            <person name="Pacleb J.M."/>
            <person name="Palazzolo M."/>
            <person name="Pittman G.S."/>
            <person name="Pan S."/>
            <person name="Pollard J."/>
            <person name="Puri V."/>
            <person name="Reese M.G."/>
            <person name="Reinert K."/>
            <person name="Remington K."/>
            <person name="Saunders R.D.C."/>
            <person name="Scheeler F."/>
            <person name="Shen H."/>
            <person name="Shue B.C."/>
            <person name="Siden-Kiamos I."/>
            <person name="Simpson M."/>
            <person name="Skupski M.P."/>
            <person name="Smith T.J."/>
            <person name="Spier E."/>
            <person name="Spradling A.C."/>
            <person name="Stapleton M."/>
            <person name="Strong R."/>
            <person name="Sun E."/>
            <person name="Svirskas R."/>
            <person name="Tector C."/>
            <person name="Turner R."/>
            <person name="Venter E."/>
            <person name="Wang A.H."/>
            <person name="Wang X."/>
            <person name="Wang Z.-Y."/>
            <person name="Wassarman D.A."/>
            <person name="Weinstock G.M."/>
            <person name="Weissenbach J."/>
            <person name="Williams S.M."/>
            <person name="Woodage T."/>
            <person name="Worley K.C."/>
            <person name="Wu D."/>
            <person name="Yang S."/>
            <person name="Yao Q.A."/>
            <person name="Ye J."/>
            <person name="Yeh R.-F."/>
            <person name="Zaveri J.S."/>
            <person name="Zhan M."/>
            <person name="Zhang G."/>
            <person name="Zhao Q."/>
            <person name="Zheng L."/>
            <person name="Zheng X.H."/>
            <person name="Zhong F.N."/>
            <person name="Zhong W."/>
            <person name="Zhou X."/>
            <person name="Zhu S.C."/>
            <person name="Zhu X."/>
            <person name="Smith H.O."/>
            <person name="Gibbs R.A."/>
            <person name="Myers E.W."/>
            <person name="Rubin G.M."/>
            <person name="Venter J.C."/>
        </authorList>
    </citation>
    <scope>NUCLEOTIDE SEQUENCE [LARGE SCALE GENOMIC DNA]</scope>
    <source>
        <strain>Berkeley</strain>
    </source>
</reference>
<reference key="3">
    <citation type="journal article" date="2002" name="Genome Biol.">
        <title>Annotation of the Drosophila melanogaster euchromatic genome: a systematic review.</title>
        <authorList>
            <person name="Misra S."/>
            <person name="Crosby M.A."/>
            <person name="Mungall C.J."/>
            <person name="Matthews B.B."/>
            <person name="Campbell K.S."/>
            <person name="Hradecky P."/>
            <person name="Huang Y."/>
            <person name="Kaminker J.S."/>
            <person name="Millburn G.H."/>
            <person name="Prochnik S.E."/>
            <person name="Smith C.D."/>
            <person name="Tupy J.L."/>
            <person name="Whitfield E.J."/>
            <person name="Bayraktaroglu L."/>
            <person name="Berman B.P."/>
            <person name="Bettencourt B.R."/>
            <person name="Celniker S.E."/>
            <person name="de Grey A.D.N.J."/>
            <person name="Drysdale R.A."/>
            <person name="Harris N.L."/>
            <person name="Richter J."/>
            <person name="Russo S."/>
            <person name="Schroeder A.J."/>
            <person name="Shu S.Q."/>
            <person name="Stapleton M."/>
            <person name="Yamada C."/>
            <person name="Ashburner M."/>
            <person name="Gelbart W.M."/>
            <person name="Rubin G.M."/>
            <person name="Lewis S.E."/>
        </authorList>
    </citation>
    <scope>GENOME REANNOTATION</scope>
    <source>
        <strain>Berkeley</strain>
    </source>
</reference>
<reference key="4">
    <citation type="journal article" date="2002" name="Genome Biol.">
        <title>A Drosophila full-length cDNA resource.</title>
        <authorList>
            <person name="Stapleton M."/>
            <person name="Carlson J.W."/>
            <person name="Brokstein P."/>
            <person name="Yu C."/>
            <person name="Champe M."/>
            <person name="George R.A."/>
            <person name="Guarin H."/>
            <person name="Kronmiller B."/>
            <person name="Pacleb J.M."/>
            <person name="Park S."/>
            <person name="Wan K.H."/>
            <person name="Rubin G.M."/>
            <person name="Celniker S.E."/>
        </authorList>
    </citation>
    <scope>NUCLEOTIDE SEQUENCE [LARGE SCALE MRNA] OF 1191-1982</scope>
    <source>
        <strain>Berkeley</strain>
        <tissue>Embryo</tissue>
    </source>
</reference>
<reference key="5">
    <citation type="journal article" date="2008" name="J. Proteome Res.">
        <title>Phosphoproteome analysis of Drosophila melanogaster embryos.</title>
        <authorList>
            <person name="Zhai B."/>
            <person name="Villen J."/>
            <person name="Beausoleil S.A."/>
            <person name="Mintseris J."/>
            <person name="Gygi S.P."/>
        </authorList>
    </citation>
    <scope>PHOSPHORYLATION [LARGE SCALE ANALYSIS] AT SER-79; SER-83; SER-201; SER-204; SER-210; SER-221; SER-284; SER-285; SER-292; SER-295; SER-299; SER-310; SER-313; TYR-701; THR-702; SER-1691 AND SER-1694</scope>
    <scope>IDENTIFICATION BY MASS SPECTROMETRY</scope>
    <source>
        <tissue>Embryo</tissue>
    </source>
</reference>
<reference key="6">
    <citation type="journal article" date="2008" name="Mol. Cell. Biol.">
        <title>dCHD3, a novel ATP-dependent chromatin remodeler associated with sites of active transcription.</title>
        <authorList>
            <person name="Murawska M."/>
            <person name="Kunert N."/>
            <person name="van Vugt J."/>
            <person name="Laengst G."/>
            <person name="Kremmer E."/>
            <person name="Logie C."/>
            <person name="Brehm A."/>
        </authorList>
    </citation>
    <scope>FUNCTION</scope>
    <scope>CATALYTIC ACTIVITY</scope>
    <scope>ACTIVITY REGULATION</scope>
    <scope>INTERACTION WITH HDAC1</scope>
    <scope>SUBCELLULAR LOCATION</scope>
    <scope>DEVELOPMENTAL STAGE</scope>
</reference>
<protein>
    <recommendedName>
        <fullName>Chromodomain-helicase-DNA-binding protein Mi-2 homolog</fullName>
        <ecNumber evidence="6">3.6.4.-</ecNumber>
    </recommendedName>
    <alternativeName>
        <fullName>ATP-dependent helicase Mi-2</fullName>
        <shortName>dMi-2</shortName>
    </alternativeName>
</protein>
<proteinExistence type="evidence at protein level"/>
<organism>
    <name type="scientific">Drosophila melanogaster</name>
    <name type="common">Fruit fly</name>
    <dbReference type="NCBI Taxonomy" id="7227"/>
    <lineage>
        <taxon>Eukaryota</taxon>
        <taxon>Metazoa</taxon>
        <taxon>Ecdysozoa</taxon>
        <taxon>Arthropoda</taxon>
        <taxon>Hexapoda</taxon>
        <taxon>Insecta</taxon>
        <taxon>Pterygota</taxon>
        <taxon>Neoptera</taxon>
        <taxon>Endopterygota</taxon>
        <taxon>Diptera</taxon>
        <taxon>Brachycera</taxon>
        <taxon>Muscomorpha</taxon>
        <taxon>Ephydroidea</taxon>
        <taxon>Drosophilidae</taxon>
        <taxon>Drosophila</taxon>
        <taxon>Sophophora</taxon>
    </lineage>
</organism>
<gene>
    <name type="primary">Mi-2</name>
    <name type="ORF">CG8103</name>
</gene>
<comment type="function">
    <text evidence="6 8">ATP-dependent chromatin-remodeling factor which acts in nucleosome-remodeling by catalyzing ATP-dependent nucleosome mobilization (PubMed:18250149). Involved in regulating transcription (PubMed:18250149, PubMed:9836641). Plays a vital role in development (PubMed:9836641). Binds to a portion of Hunchback (HB) protein that is critical for repression of bithorax complex (BXC) genes (PubMed:9836641). May also function in polycomb group (PcG) repression of Hox genes (PubMed:9836641). May also act as part of the nucleosome remodeling and deacetylase complex (the NuRD complex) which participates in the remodeling of chromatin by deacetylating histones (PubMed:18250149).</text>
</comment>
<comment type="catalytic activity">
    <reaction evidence="6">
        <text>ATP + H2O = ADP + phosphate + H(+)</text>
        <dbReference type="Rhea" id="RHEA:13065"/>
        <dbReference type="ChEBI" id="CHEBI:15377"/>
        <dbReference type="ChEBI" id="CHEBI:15378"/>
        <dbReference type="ChEBI" id="CHEBI:30616"/>
        <dbReference type="ChEBI" id="CHEBI:43474"/>
        <dbReference type="ChEBI" id="CHEBI:456216"/>
    </reaction>
</comment>
<comment type="activity regulation">
    <text evidence="6">ATPase activity is stimulated by binding to either DNA or nucleosomes.</text>
</comment>
<comment type="subunit">
    <text evidence="6">Interacts with the NuRD complex member HDAC1/Rpd3.</text>
</comment>
<comment type="interaction">
    <interactant intactId="EBI-112333">
        <id>O97159</id>
    </interactant>
    <interactant intactId="EBI-196367">
        <id>Q9VZ27</id>
        <label>CDK2AP1</label>
    </interactant>
    <organismsDiffer>false</organismsDiffer>
    <experiments>4</experiments>
</comment>
<comment type="interaction">
    <interactant intactId="EBI-112333">
        <id>O97159</id>
    </interactant>
    <interactant intactId="EBI-91014">
        <id>Q0E8J0</id>
        <label>MEP-1</label>
    </interactant>
    <organismsDiffer>false</organismsDiffer>
    <experiments>13</experiments>
</comment>
<comment type="subcellular location">
    <subcellularLocation>
        <location evidence="6">Nucleus</location>
    </subcellularLocation>
    <subcellularLocation>
        <location evidence="6">Chromosome</location>
    </subcellularLocation>
    <text evidence="6">During embryogenesis, detected in nuclei before and after their migration to the membrane of the preblastoderm embryo (PubMed:18250149). Expression is diffuse in mitotic nuclei and is still detectable in nuclei at postgastrulation (PubMed:18250149). In polytene chromosomes of third instar larvae, weakly expressed at the chromocenter and fourth chromosome (PubMed:18250149).</text>
</comment>
<comment type="developmental stage">
    <text evidence="6">Expressed in embryos, with levels peaking around 6 to 9 hours after egg deposition, and then sharply decreases becoming undetectable at the first larval stage (at protein level) (PubMed:18250149). Reappears at the pupal stage when it is weakly expressed (at protein level) (PubMed:18250149). Strongly expressed in adult females but expression is low to absent in adult males (at protein level) (PubMed:18250149).</text>
</comment>
<comment type="similarity">
    <text evidence="9">Belongs to the SNF2/RAD54 helicase family.</text>
</comment>
<comment type="sequence caution" evidence="9">
    <conflict type="erroneous initiation">
        <sequence resource="EMBL-CDS" id="AAM29373"/>
    </conflict>
</comment>
<feature type="chain" id="PRO_0000080236" description="Chromodomain-helicase-DNA-binding protein Mi-2 homolog">
    <location>
        <begin position="1"/>
        <end position="1982"/>
    </location>
</feature>
<feature type="domain" description="Chromo 1" evidence="1">
    <location>
        <begin position="488"/>
        <end position="566"/>
    </location>
</feature>
<feature type="domain" description="Chromo 2" evidence="1">
    <location>
        <begin position="612"/>
        <end position="673"/>
    </location>
</feature>
<feature type="domain" description="Helicase ATP-binding" evidence="3">
    <location>
        <begin position="742"/>
        <end position="924"/>
    </location>
</feature>
<feature type="domain" description="Helicase C-terminal" evidence="4">
    <location>
        <begin position="1056"/>
        <end position="1218"/>
    </location>
</feature>
<feature type="zinc finger region" description="PHD-type 1" evidence="2">
    <location>
        <begin position="377"/>
        <end position="424"/>
    </location>
</feature>
<feature type="zinc finger region" description="PHD-type 2" evidence="2">
    <location>
        <begin position="437"/>
        <end position="484"/>
    </location>
</feature>
<feature type="region of interest" description="Disordered" evidence="5">
    <location>
        <begin position="1"/>
        <end position="125"/>
    </location>
</feature>
<feature type="region of interest" description="Disordered" evidence="5">
    <location>
        <begin position="192"/>
        <end position="348"/>
    </location>
</feature>
<feature type="region of interest" description="Disordered" evidence="5">
    <location>
        <begin position="354"/>
        <end position="373"/>
    </location>
</feature>
<feature type="region of interest" description="Disordered" evidence="5">
    <location>
        <begin position="671"/>
        <end position="712"/>
    </location>
</feature>
<feature type="region of interest" description="Disordered" evidence="5">
    <location>
        <begin position="1331"/>
        <end position="1396"/>
    </location>
</feature>
<feature type="region of interest" description="Disordered" evidence="5">
    <location>
        <begin position="1536"/>
        <end position="1715"/>
    </location>
</feature>
<feature type="short sequence motif" description="DEAH box">
    <location>
        <begin position="875"/>
        <end position="878"/>
    </location>
</feature>
<feature type="compositionally biased region" description="Acidic residues" evidence="5">
    <location>
        <begin position="1"/>
        <end position="19"/>
    </location>
</feature>
<feature type="compositionally biased region" description="Basic residues" evidence="5">
    <location>
        <begin position="52"/>
        <end position="62"/>
    </location>
</feature>
<feature type="compositionally biased region" description="Basic and acidic residues" evidence="5">
    <location>
        <begin position="104"/>
        <end position="116"/>
    </location>
</feature>
<feature type="compositionally biased region" description="Basic and acidic residues" evidence="5">
    <location>
        <begin position="218"/>
        <end position="232"/>
    </location>
</feature>
<feature type="compositionally biased region" description="Acidic residues" evidence="5">
    <location>
        <begin position="233"/>
        <end position="247"/>
    </location>
</feature>
<feature type="compositionally biased region" description="Basic residues" evidence="5">
    <location>
        <begin position="251"/>
        <end position="266"/>
    </location>
</feature>
<feature type="compositionally biased region" description="Basic and acidic residues" evidence="5">
    <location>
        <begin position="295"/>
        <end position="319"/>
    </location>
</feature>
<feature type="compositionally biased region" description="Basic residues" evidence="5">
    <location>
        <begin position="354"/>
        <end position="364"/>
    </location>
</feature>
<feature type="compositionally biased region" description="Basic residues" evidence="5">
    <location>
        <begin position="676"/>
        <end position="687"/>
    </location>
</feature>
<feature type="compositionally biased region" description="Polar residues" evidence="5">
    <location>
        <begin position="1349"/>
        <end position="1361"/>
    </location>
</feature>
<feature type="compositionally biased region" description="Acidic residues" evidence="5">
    <location>
        <begin position="1364"/>
        <end position="1377"/>
    </location>
</feature>
<feature type="compositionally biased region" description="Low complexity" evidence="5">
    <location>
        <begin position="1547"/>
        <end position="1568"/>
    </location>
</feature>
<feature type="compositionally biased region" description="Basic and acidic residues" evidence="5">
    <location>
        <begin position="1569"/>
        <end position="1611"/>
    </location>
</feature>
<feature type="compositionally biased region" description="Basic and acidic residues" evidence="5">
    <location>
        <begin position="1621"/>
        <end position="1664"/>
    </location>
</feature>
<feature type="compositionally biased region" description="Basic and acidic residues" evidence="5">
    <location>
        <begin position="1679"/>
        <end position="1689"/>
    </location>
</feature>
<feature type="compositionally biased region" description="Low complexity" evidence="5">
    <location>
        <begin position="1700"/>
        <end position="1711"/>
    </location>
</feature>
<feature type="binding site" evidence="3">
    <location>
        <begin position="755"/>
        <end position="762"/>
    </location>
    <ligand>
        <name>ATP</name>
        <dbReference type="ChEBI" id="CHEBI:30616"/>
    </ligand>
</feature>
<feature type="modified residue" description="Phosphoserine" evidence="7">
    <location>
        <position position="79"/>
    </location>
</feature>
<feature type="modified residue" description="Phosphoserine" evidence="7">
    <location>
        <position position="83"/>
    </location>
</feature>
<feature type="modified residue" description="Phosphoserine" evidence="7">
    <location>
        <position position="201"/>
    </location>
</feature>
<feature type="modified residue" description="Phosphoserine" evidence="7">
    <location>
        <position position="204"/>
    </location>
</feature>
<feature type="modified residue" description="Phosphoserine" evidence="7">
    <location>
        <position position="210"/>
    </location>
</feature>
<feature type="modified residue" description="Phosphoserine" evidence="7">
    <location>
        <position position="221"/>
    </location>
</feature>
<feature type="modified residue" description="Phosphoserine" evidence="7">
    <location>
        <position position="284"/>
    </location>
</feature>
<feature type="modified residue" description="Phosphoserine" evidence="7">
    <location>
        <position position="285"/>
    </location>
</feature>
<feature type="modified residue" description="Phosphoserine" evidence="7">
    <location>
        <position position="292"/>
    </location>
</feature>
<feature type="modified residue" description="Phosphoserine" evidence="7">
    <location>
        <position position="295"/>
    </location>
</feature>
<feature type="modified residue" description="Phosphoserine" evidence="7">
    <location>
        <position position="299"/>
    </location>
</feature>
<feature type="modified residue" description="Phosphoserine" evidence="7">
    <location>
        <position position="310"/>
    </location>
</feature>
<feature type="modified residue" description="Phosphoserine" evidence="7">
    <location>
        <position position="313"/>
    </location>
</feature>
<feature type="modified residue" description="Phosphotyrosine" evidence="7">
    <location>
        <position position="701"/>
    </location>
</feature>
<feature type="modified residue" description="Phosphothreonine" evidence="7">
    <location>
        <position position="702"/>
    </location>
</feature>
<feature type="modified residue" description="Phosphoserine" evidence="7">
    <location>
        <position position="1691"/>
    </location>
</feature>
<feature type="modified residue" description="Phosphoserine" evidence="7">
    <location>
        <position position="1694"/>
    </location>
</feature>
<feature type="mutagenesis site" description="In allele MI-2-5; larval lethal." evidence="8">
    <original>G</original>
    <variation>D</variation>
    <location>
        <position position="737"/>
    </location>
</feature>
<feature type="sequence conflict" description="In Ref. 1; AAD17276." evidence="9" ref="1">
    <original>G</original>
    <variation>A</variation>
    <location>
        <position position="101"/>
    </location>
</feature>
<name>CHDM_DROME</name>
<sequence length="1982" mass="224201">MASEEENDDNFQEEEEAQEDNAPAAELSNDSDAPLKPNNDEDDDYDPEDSRRKKKGKKRKTRKGEEKGRKKKKRKKNESEEDSDFVQHDEEVEYPSTSKRGRKRKEEKQAAKEKESASSGMPSVEDVCSAFSVCNVEIEYSEEELQSLTTYKAFMHHVRPILQKENPKIAAPKLVMLVAAKWREFCESNPHIQQEGGAAGSGGSAGQARSVTGDEPEEPRSSRSSRNEKPDDIYEEAVEEEEEEEEEEKKPRRKRSGRGKKGRRPSGKVPTLKIKLLGKRKRDSSDEEQDASGASERDSDLEFERMLQKSDDSADEKEAPVSSKADNSAPAAQDDGSGAPVVRKKAKTKIGNKFKKKNKLKKTKNFPEGEDGEHEHQDYCEVCQQGGEIILCDTCPRAYHLVCLEPELDEPPEGKWSCPHCEADGGAAEEEDDDEHQEFCRVCKDGGELLCCDSCPSAYHTFCLNPPLDTIPDGDWRCPRCSCPPLTGKAEKIITWRWAQRSNDDGPSTSKGSKNSNSRVREYFIKWHNMSYWHCEWVPEVQLDVHHPLMIRSFQRKYDMEEPPKFEESLDEADTRYKRIQRHKDKVGMKANDDAEVLEERFYKNGVKPEWLIVQRVINHRTARDGSTMYLVKWRELPYDKSTWEEEGDDIQGLRQAIDYYQDLRAVCTSETTQSRSKKSKKGRKSKLKVEDDEDRPVKHYTPPPEKPTTDLKKKYEDQPAFLEGTGMQLHPYQIEGINWLRYSWGQGIDTILADEMGLGKTIQTVTFLYSLYKEGHCRGPFLVAVPLSTLVNWEREFELWAPDFYCITYIGDKDSRAVIRENELSFEEGAIRGSKVSRLRTTQYKFNVLLTSYELISMDAACLGSIDWAVLVVDEAHRLKSNQSKFFRILNSYTIAYKLLLTGTPLQNNLEELFHLLNFLSRDKFNDLQAFQGEFADVSKEEQVKRLHEMLGPHMLRRLKTDVLKNMPSKSEFIVRVELSAMQKKFYKFILTKNYEALNSKSGGGSCSLINIMMDLKKCCNHPYLFPSAAEEATTAAGGLYEINSLTKAAGKLVLLSKMLKQLKAQNHRVLIFSQMTKMLDILEDFLEGEQYKYERIDGGITGTLRQEAIDRFNAPGAQQFVFLLSTRAGGLGINLATADTVIIYDSDWNPHNDIQAFSRAHRIGQANKVMIYRFVTRNSVEERVTQVAKRKMMLTHLVVRPGMGGKGANFTKQELDDILRFGTEDLFKEDDKEEAIHYDDKAVAELLDRTNRGIEEKESWANEYLSSFKVASYATKEEEEEEETEIIKQDAENSDPAYWVKLLRHHYEQHQEDVGRSLGKGKRVRKQVNYTDGGVVAADTTRDDSNWQDNGSEYNSEYSAGSDEDGGDDDFDDQNGAERKAKRRLERRDDRPLPPLLARVGGNIEVLGFNARQRKSFLNAIMRYGMPPQDAFNSQWLVRDLRGKSERNFKAYVSLFMRHLCEPGADNAETFADGVPREGLSRQHVLTRIGVMSLIRKKVQEFEHINGYYSMPELILKPCEPVRSALKQDVAALEAPPTGGNVDKSATTSNSVTPATSAAPSPAPASEKGEDKDKDSEKEKDKTSAEKSEVKQEQEAEEDKKPGDVKQENPVEEAAGDTKPSDAEVKTEVAKTEPKEETKDPEVKEEPKTEEKEKEKVDDKKPIPPTTVIDDDDDDVMIVKEDGELEKPSASSPKDQKAVAAATSAATGATGKGAEDSLEVLKRKFMFNIADGGFTELHTLWLNEEKAAVPGREYEIWHRRHDYWLLAGIVTHGYGRWQDIQNDIRFAIINEPFKMDVGKGNFLEIKNKFLARRFKLLEQALVIEEQLRRAAYLNLAQDPSHPAMSLNARFAEVECLAESHQHLSKESLAGNKPANAVLHKVLNQLEELLSDMKSDVSRLPATLARIPPVAQRLQMSERSILSRLAATAGNASNAAQLMAQFPAGFQGTTLPAFTSGPAGNFANFRPQFSVPGQLSNNSGV</sequence>
<evidence type="ECO:0000255" key="1">
    <source>
        <dbReference type="PROSITE-ProRule" id="PRU00053"/>
    </source>
</evidence>
<evidence type="ECO:0000255" key="2">
    <source>
        <dbReference type="PROSITE-ProRule" id="PRU00146"/>
    </source>
</evidence>
<evidence type="ECO:0000255" key="3">
    <source>
        <dbReference type="PROSITE-ProRule" id="PRU00541"/>
    </source>
</evidence>
<evidence type="ECO:0000255" key="4">
    <source>
        <dbReference type="PROSITE-ProRule" id="PRU00542"/>
    </source>
</evidence>
<evidence type="ECO:0000256" key="5">
    <source>
        <dbReference type="SAM" id="MobiDB-lite"/>
    </source>
</evidence>
<evidence type="ECO:0000269" key="6">
    <source>
    </source>
</evidence>
<evidence type="ECO:0000269" key="7">
    <source>
    </source>
</evidence>
<evidence type="ECO:0000269" key="8">
    <source>
    </source>
</evidence>
<evidence type="ECO:0000305" key="9"/>
<dbReference type="EC" id="3.6.4.-" evidence="6"/>
<dbReference type="EMBL" id="AF119716">
    <property type="protein sequence ID" value="AAD17276.1"/>
    <property type="molecule type" value="mRNA"/>
</dbReference>
<dbReference type="EMBL" id="AE014296">
    <property type="protein sequence ID" value="AAF49099.2"/>
    <property type="molecule type" value="Genomic_DNA"/>
</dbReference>
<dbReference type="EMBL" id="AY113368">
    <property type="protein sequence ID" value="AAM29373.1"/>
    <property type="status" value="ALT_INIT"/>
    <property type="molecule type" value="mRNA"/>
</dbReference>
<dbReference type="RefSeq" id="NP_001163476.1">
    <property type="nucleotide sequence ID" value="NM_001170005.2"/>
</dbReference>
<dbReference type="RefSeq" id="NP_649154.2">
    <property type="nucleotide sequence ID" value="NM_140897.4"/>
</dbReference>
<dbReference type="SMR" id="O97159"/>
<dbReference type="BioGRID" id="65438">
    <property type="interactions" value="57"/>
</dbReference>
<dbReference type="ComplexPortal" id="CPX-2355">
    <property type="entry name" value="Mi2/NuRD nucleosome remodeling and deacetylase complex"/>
</dbReference>
<dbReference type="DIP" id="DIP-22862N"/>
<dbReference type="FunCoup" id="O97159">
    <property type="interactions" value="1983"/>
</dbReference>
<dbReference type="IntAct" id="O97159">
    <property type="interactions" value="261"/>
</dbReference>
<dbReference type="MINT" id="O97159"/>
<dbReference type="STRING" id="7227.FBpp0099808"/>
<dbReference type="GlyGen" id="O97159">
    <property type="glycosylation" value="1 site"/>
</dbReference>
<dbReference type="iPTMnet" id="O97159"/>
<dbReference type="PaxDb" id="7227-FBpp0099808"/>
<dbReference type="EnsemblMetazoa" id="FBtr0074919">
    <property type="protein sequence ID" value="FBpp0074688"/>
    <property type="gene ID" value="FBgn0262519"/>
</dbReference>
<dbReference type="EnsemblMetazoa" id="FBtr0302046">
    <property type="protein sequence ID" value="FBpp0291256"/>
    <property type="gene ID" value="FBgn0262519"/>
</dbReference>
<dbReference type="GeneID" id="40170"/>
<dbReference type="KEGG" id="dme:Dmel_CG8103"/>
<dbReference type="AGR" id="FB:FBgn0262519"/>
<dbReference type="CTD" id="40170"/>
<dbReference type="FlyBase" id="FBgn0262519">
    <property type="gene designation" value="Mi-2"/>
</dbReference>
<dbReference type="VEuPathDB" id="VectorBase:FBgn0262519"/>
<dbReference type="eggNOG" id="KOG0383">
    <property type="taxonomic scope" value="Eukaryota"/>
</dbReference>
<dbReference type="GeneTree" id="ENSGT00940000169383"/>
<dbReference type="HOGENOM" id="CLU_000315_22_3_1"/>
<dbReference type="InParanoid" id="O97159"/>
<dbReference type="OrthoDB" id="5857104at2759"/>
<dbReference type="PhylomeDB" id="O97159"/>
<dbReference type="Reactome" id="R-DME-3214815">
    <property type="pathway name" value="HDACs deacetylate histones"/>
</dbReference>
<dbReference type="Reactome" id="R-DME-6804758">
    <property type="pathway name" value="Regulation of TP53 Activity through Acetylation"/>
</dbReference>
<dbReference type="Reactome" id="R-DME-8943724">
    <property type="pathway name" value="Regulation of PTEN gene transcription"/>
</dbReference>
<dbReference type="Reactome" id="R-DME-9031628">
    <property type="pathway name" value="NGF-stimulated transcription"/>
</dbReference>
<dbReference type="SignaLink" id="O97159"/>
<dbReference type="BioGRID-ORCS" id="40170">
    <property type="hits" value="1 hit in 3 CRISPR screens"/>
</dbReference>
<dbReference type="ChiTaRS" id="Mi-2">
    <property type="organism name" value="fly"/>
</dbReference>
<dbReference type="GenomeRNAi" id="40170"/>
<dbReference type="PRO" id="PR:O97159"/>
<dbReference type="Proteomes" id="UP000000803">
    <property type="component" value="Chromosome 3L"/>
</dbReference>
<dbReference type="Bgee" id="FBgn0262519">
    <property type="expression patterns" value="Expressed in egg cell and 224 other cell types or tissues"/>
</dbReference>
<dbReference type="ExpressionAtlas" id="O97159">
    <property type="expression patterns" value="baseline and differential"/>
</dbReference>
<dbReference type="GO" id="GO:0000785">
    <property type="term" value="C:chromatin"/>
    <property type="evidence" value="ECO:0000318"/>
    <property type="project" value="GO_Central"/>
</dbReference>
<dbReference type="GO" id="GO:0005829">
    <property type="term" value="C:cytosol"/>
    <property type="evidence" value="ECO:0007005"/>
    <property type="project" value="FlyBase"/>
</dbReference>
<dbReference type="GO" id="GO:0000791">
    <property type="term" value="C:euchromatin"/>
    <property type="evidence" value="ECO:0000314"/>
    <property type="project" value="FlyBase"/>
</dbReference>
<dbReference type="GO" id="GO:0005634">
    <property type="term" value="C:nucleus"/>
    <property type="evidence" value="ECO:0000314"/>
    <property type="project" value="FlyBase"/>
</dbReference>
<dbReference type="GO" id="GO:0016581">
    <property type="term" value="C:NuRD complex"/>
    <property type="evidence" value="ECO:0000250"/>
    <property type="project" value="FlyBase"/>
</dbReference>
<dbReference type="GO" id="GO:0005700">
    <property type="term" value="C:polytene chromosome"/>
    <property type="evidence" value="ECO:0000314"/>
    <property type="project" value="FlyBase"/>
</dbReference>
<dbReference type="GO" id="GO:0005524">
    <property type="term" value="F:ATP binding"/>
    <property type="evidence" value="ECO:0007669"/>
    <property type="project" value="UniProtKB-KW"/>
</dbReference>
<dbReference type="GO" id="GO:0016887">
    <property type="term" value="F:ATP hydrolysis activity"/>
    <property type="evidence" value="ECO:0000314"/>
    <property type="project" value="FlyBase"/>
</dbReference>
<dbReference type="GO" id="GO:0140658">
    <property type="term" value="F:ATP-dependent chromatin remodeler activity"/>
    <property type="evidence" value="ECO:0000314"/>
    <property type="project" value="FlyBase"/>
</dbReference>
<dbReference type="GO" id="GO:0003682">
    <property type="term" value="F:chromatin binding"/>
    <property type="evidence" value="ECO:0000314"/>
    <property type="project" value="FlyBase"/>
</dbReference>
<dbReference type="GO" id="GO:0003677">
    <property type="term" value="F:DNA binding"/>
    <property type="evidence" value="ECO:0000318"/>
    <property type="project" value="GO_Central"/>
</dbReference>
<dbReference type="GO" id="GO:0004386">
    <property type="term" value="F:helicase activity"/>
    <property type="evidence" value="ECO:0007669"/>
    <property type="project" value="UniProtKB-KW"/>
</dbReference>
<dbReference type="GO" id="GO:0042393">
    <property type="term" value="F:histone binding"/>
    <property type="evidence" value="ECO:0000318"/>
    <property type="project" value="GO_Central"/>
</dbReference>
<dbReference type="GO" id="GO:0140750">
    <property type="term" value="F:nucleosome array spacer activity"/>
    <property type="evidence" value="ECO:0000314"/>
    <property type="project" value="FlyBase"/>
</dbReference>
<dbReference type="GO" id="GO:0008270">
    <property type="term" value="F:zinc ion binding"/>
    <property type="evidence" value="ECO:0000255"/>
    <property type="project" value="FlyBase"/>
</dbReference>
<dbReference type="GO" id="GO:0006338">
    <property type="term" value="P:chromatin remodeling"/>
    <property type="evidence" value="ECO:0000318"/>
    <property type="project" value="GO_Central"/>
</dbReference>
<dbReference type="GO" id="GO:0030261">
    <property type="term" value="P:chromosome condensation"/>
    <property type="evidence" value="ECO:0000315"/>
    <property type="project" value="FlyBase"/>
</dbReference>
<dbReference type="GO" id="GO:0051276">
    <property type="term" value="P:chromosome organization"/>
    <property type="evidence" value="ECO:0000315"/>
    <property type="project" value="CACAO"/>
</dbReference>
<dbReference type="GO" id="GO:0007064">
    <property type="term" value="P:mitotic sister chromatid cohesion"/>
    <property type="evidence" value="ECO:0000315"/>
    <property type="project" value="FlyBase"/>
</dbReference>
<dbReference type="GO" id="GO:0045892">
    <property type="term" value="P:negative regulation of DNA-templated transcription"/>
    <property type="evidence" value="ECO:0000316"/>
    <property type="project" value="UniProtKB"/>
</dbReference>
<dbReference type="GO" id="GO:0000122">
    <property type="term" value="P:negative regulation of transcription by RNA polymerase II"/>
    <property type="evidence" value="ECO:0000314"/>
    <property type="project" value="FlyBase"/>
</dbReference>
<dbReference type="GO" id="GO:0034728">
    <property type="term" value="P:nucleosome organization"/>
    <property type="evidence" value="ECO:0000314"/>
    <property type="project" value="FlyBase"/>
</dbReference>
<dbReference type="GO" id="GO:0006357">
    <property type="term" value="P:regulation of transcription by RNA polymerase II"/>
    <property type="evidence" value="ECO:0000315"/>
    <property type="project" value="FlyBase"/>
</dbReference>
<dbReference type="GO" id="GO:0007283">
    <property type="term" value="P:spermatogenesis"/>
    <property type="evidence" value="ECO:0000315"/>
    <property type="project" value="FlyBase"/>
</dbReference>
<dbReference type="GO" id="GO:0141006">
    <property type="term" value="P:transposable element silencing by piRNA-mediated heterochromatin formation"/>
    <property type="evidence" value="ECO:0000315"/>
    <property type="project" value="FlyBase"/>
</dbReference>
<dbReference type="CDD" id="cd18667">
    <property type="entry name" value="CD1_tandem_CHD3-4_like"/>
    <property type="match status" value="1"/>
</dbReference>
<dbReference type="CDD" id="cd18662">
    <property type="entry name" value="CD2_tandem_CHD3-4_like"/>
    <property type="match status" value="1"/>
</dbReference>
<dbReference type="CDD" id="cd17994">
    <property type="entry name" value="DEXHc_CHD3_4_5"/>
    <property type="match status" value="1"/>
</dbReference>
<dbReference type="CDD" id="cd15531">
    <property type="entry name" value="PHD1_CHD_II"/>
    <property type="match status" value="1"/>
</dbReference>
<dbReference type="CDD" id="cd15532">
    <property type="entry name" value="PHD2_CHD_II"/>
    <property type="match status" value="1"/>
</dbReference>
<dbReference type="CDD" id="cd18793">
    <property type="entry name" value="SF2_C_SNF"/>
    <property type="match status" value="1"/>
</dbReference>
<dbReference type="FunFam" id="1.10.10.60:FF:000037">
    <property type="entry name" value="chromodomain-helicase-DNA-binding protein 3 isoform X1"/>
    <property type="match status" value="1"/>
</dbReference>
<dbReference type="FunFam" id="3.30.40.10:FF:000001">
    <property type="entry name" value="chromodomain-helicase-DNA-binding protein 3 isoform X1"/>
    <property type="match status" value="1"/>
</dbReference>
<dbReference type="FunFam" id="3.40.50.10810:FF:000001">
    <property type="entry name" value="chromodomain-helicase-DNA-binding protein 3 isoform X1"/>
    <property type="match status" value="1"/>
</dbReference>
<dbReference type="FunFam" id="3.40.50.300:FF:000015">
    <property type="entry name" value="chromodomain-helicase-DNA-binding protein 9 isoform X1"/>
    <property type="match status" value="1"/>
</dbReference>
<dbReference type="FunFam" id="2.40.50.40:FF:000042">
    <property type="entry name" value="Chromodomain-helicase-DNA-binding protein Mi-2 homolog"/>
    <property type="match status" value="1"/>
</dbReference>
<dbReference type="Gene3D" id="2.40.50.40">
    <property type="match status" value="2"/>
</dbReference>
<dbReference type="Gene3D" id="1.10.10.60">
    <property type="entry name" value="Homeodomain-like"/>
    <property type="match status" value="1"/>
</dbReference>
<dbReference type="Gene3D" id="3.40.50.300">
    <property type="entry name" value="P-loop containing nucleotide triphosphate hydrolases"/>
    <property type="match status" value="1"/>
</dbReference>
<dbReference type="Gene3D" id="3.40.50.10810">
    <property type="entry name" value="Tandem AAA-ATPase domain"/>
    <property type="match status" value="1"/>
</dbReference>
<dbReference type="Gene3D" id="3.30.40.10">
    <property type="entry name" value="Zinc/RING finger domain, C3HC4 (zinc finger)"/>
    <property type="match status" value="2"/>
</dbReference>
<dbReference type="InterPro" id="IPR012957">
    <property type="entry name" value="CHD_C2"/>
</dbReference>
<dbReference type="InterPro" id="IPR009462">
    <property type="entry name" value="CHD_II_SANT-like"/>
</dbReference>
<dbReference type="InterPro" id="IPR012958">
    <property type="entry name" value="CHD_N"/>
</dbReference>
<dbReference type="InterPro" id="IPR016197">
    <property type="entry name" value="Chromo-like_dom_sf"/>
</dbReference>
<dbReference type="InterPro" id="IPR000953">
    <property type="entry name" value="Chromo/chromo_shadow_dom"/>
</dbReference>
<dbReference type="InterPro" id="IPR023780">
    <property type="entry name" value="Chromo_domain"/>
</dbReference>
<dbReference type="InterPro" id="IPR002464">
    <property type="entry name" value="DNA/RNA_helicase_DEAH_CS"/>
</dbReference>
<dbReference type="InterPro" id="IPR009463">
    <property type="entry name" value="DUF1087"/>
</dbReference>
<dbReference type="InterPro" id="IPR014001">
    <property type="entry name" value="Helicase_ATP-bd"/>
</dbReference>
<dbReference type="InterPro" id="IPR001650">
    <property type="entry name" value="Helicase_C-like"/>
</dbReference>
<dbReference type="InterPro" id="IPR027417">
    <property type="entry name" value="P-loop_NTPase"/>
</dbReference>
<dbReference type="InterPro" id="IPR038718">
    <property type="entry name" value="SNF2-like_sf"/>
</dbReference>
<dbReference type="InterPro" id="IPR049730">
    <property type="entry name" value="SNF2/RAD54-like_C"/>
</dbReference>
<dbReference type="InterPro" id="IPR000330">
    <property type="entry name" value="SNF2_N"/>
</dbReference>
<dbReference type="InterPro" id="IPR019786">
    <property type="entry name" value="Zinc_finger_PHD-type_CS"/>
</dbReference>
<dbReference type="InterPro" id="IPR011011">
    <property type="entry name" value="Znf_FYVE_PHD"/>
</dbReference>
<dbReference type="InterPro" id="IPR001965">
    <property type="entry name" value="Znf_PHD"/>
</dbReference>
<dbReference type="InterPro" id="IPR019787">
    <property type="entry name" value="Znf_PHD-finger"/>
</dbReference>
<dbReference type="InterPro" id="IPR013083">
    <property type="entry name" value="Znf_RING/FYVE/PHD"/>
</dbReference>
<dbReference type="PANTHER" id="PTHR45623:SF17">
    <property type="entry name" value="CHROMODOMAIN-HELICASE-DNA-BINDING PROTEIN 3-RELATED"/>
    <property type="match status" value="1"/>
</dbReference>
<dbReference type="PANTHER" id="PTHR45623">
    <property type="entry name" value="CHROMODOMAIN-HELICASE-DNA-BINDING PROTEIN 3-RELATED-RELATED"/>
    <property type="match status" value="1"/>
</dbReference>
<dbReference type="Pfam" id="PF08074">
    <property type="entry name" value="CHDCT2"/>
    <property type="match status" value="1"/>
</dbReference>
<dbReference type="Pfam" id="PF06461">
    <property type="entry name" value="CHDII_SANT-like"/>
    <property type="match status" value="1"/>
</dbReference>
<dbReference type="Pfam" id="PF08073">
    <property type="entry name" value="CHDNT"/>
    <property type="match status" value="1"/>
</dbReference>
<dbReference type="Pfam" id="PF00385">
    <property type="entry name" value="Chromo"/>
    <property type="match status" value="2"/>
</dbReference>
<dbReference type="Pfam" id="PF06465">
    <property type="entry name" value="DUF1087"/>
    <property type="match status" value="1"/>
</dbReference>
<dbReference type="Pfam" id="PF00271">
    <property type="entry name" value="Helicase_C"/>
    <property type="match status" value="1"/>
</dbReference>
<dbReference type="Pfam" id="PF00628">
    <property type="entry name" value="PHD"/>
    <property type="match status" value="2"/>
</dbReference>
<dbReference type="Pfam" id="PF00176">
    <property type="entry name" value="SNF2-rel_dom"/>
    <property type="match status" value="1"/>
</dbReference>
<dbReference type="SMART" id="SM00298">
    <property type="entry name" value="CHROMO"/>
    <property type="match status" value="2"/>
</dbReference>
<dbReference type="SMART" id="SM00487">
    <property type="entry name" value="DEXDc"/>
    <property type="match status" value="1"/>
</dbReference>
<dbReference type="SMART" id="SM01146">
    <property type="entry name" value="DUF1086"/>
    <property type="match status" value="1"/>
</dbReference>
<dbReference type="SMART" id="SM01147">
    <property type="entry name" value="DUF1087"/>
    <property type="match status" value="1"/>
</dbReference>
<dbReference type="SMART" id="SM00490">
    <property type="entry name" value="HELICc"/>
    <property type="match status" value="1"/>
</dbReference>
<dbReference type="SMART" id="SM00249">
    <property type="entry name" value="PHD"/>
    <property type="match status" value="2"/>
</dbReference>
<dbReference type="SUPFAM" id="SSF54160">
    <property type="entry name" value="Chromo domain-like"/>
    <property type="match status" value="2"/>
</dbReference>
<dbReference type="SUPFAM" id="SSF57903">
    <property type="entry name" value="FYVE/PHD zinc finger"/>
    <property type="match status" value="1"/>
</dbReference>
<dbReference type="SUPFAM" id="SSF52540">
    <property type="entry name" value="P-loop containing nucleoside triphosphate hydrolases"/>
    <property type="match status" value="2"/>
</dbReference>
<dbReference type="PROSITE" id="PS50013">
    <property type="entry name" value="CHROMO_2"/>
    <property type="match status" value="2"/>
</dbReference>
<dbReference type="PROSITE" id="PS00690">
    <property type="entry name" value="DEAH_ATP_HELICASE"/>
    <property type="match status" value="1"/>
</dbReference>
<dbReference type="PROSITE" id="PS51192">
    <property type="entry name" value="HELICASE_ATP_BIND_1"/>
    <property type="match status" value="1"/>
</dbReference>
<dbReference type="PROSITE" id="PS51194">
    <property type="entry name" value="HELICASE_CTER"/>
    <property type="match status" value="1"/>
</dbReference>
<dbReference type="PROSITE" id="PS01359">
    <property type="entry name" value="ZF_PHD_1"/>
    <property type="match status" value="2"/>
</dbReference>
<dbReference type="PROSITE" id="PS50016">
    <property type="entry name" value="ZF_PHD_2"/>
    <property type="match status" value="2"/>
</dbReference>
<accession>O97159</accession>
<accession>Q8MZ43</accession>
<accession>Q9VW50</accession>